<proteinExistence type="evidence at protein level"/>
<evidence type="ECO:0000250" key="1">
    <source>
        <dbReference type="UniProtKB" id="A8QCW4"/>
    </source>
</evidence>
<evidence type="ECO:0000250" key="2">
    <source>
        <dbReference type="UniProtKB" id="Q2VG90"/>
    </source>
</evidence>
<evidence type="ECO:0000250" key="3">
    <source>
        <dbReference type="UniProtKB" id="W3VKA4"/>
    </source>
</evidence>
<evidence type="ECO:0000255" key="4"/>
<evidence type="ECO:0000255" key="5">
    <source>
        <dbReference type="PROSITE-ProRule" id="PRU00498"/>
    </source>
</evidence>
<evidence type="ECO:0000256" key="6">
    <source>
        <dbReference type="SAM" id="MobiDB-lite"/>
    </source>
</evidence>
<evidence type="ECO:0000269" key="7">
    <source>
    </source>
</evidence>
<evidence type="ECO:0000303" key="8">
    <source>
    </source>
</evidence>
<evidence type="ECO:0000303" key="9">
    <source>
    </source>
</evidence>
<evidence type="ECO:0000305" key="10"/>
<evidence type="ECO:0000305" key="11">
    <source>
    </source>
</evidence>
<reference key="1">
    <citation type="journal article" date="2019" name="Microbiol. Resour. Announc.">
        <title>Complete Genome Sequence of Malassezia restricta CBS 7877, an Opportunist Pathogen Involved in Dandruff and Seborrheic Dermatitis.</title>
        <authorList>
            <person name="Morand S.C."/>
            <person name="Bertignac M."/>
            <person name="Iltis A."/>
            <person name="Kolder I.C.R.M."/>
            <person name="Pirovano W."/>
            <person name="Jourdain R."/>
            <person name="Clavaud C."/>
        </authorList>
    </citation>
    <scope>NUCLEOTIDE SEQUENCE [LARGE SCALE GENOMIC DNA]</scope>
    <source>
        <strain>ATCC 96810 / NBRC 103918 / CBS 7877</strain>
    </source>
</reference>
<reference key="2">
    <citation type="journal article" date="2020" name="Ann. Dermatol.">
        <title>pH-Dependent Expression, Stability, and Activity of Malassezia restricta MrLip5 Lipase.</title>
        <authorList>
            <person name="Park M."/>
            <person name="Lee J.S."/>
            <person name="Jung W.H."/>
            <person name="Lee Y.W."/>
        </authorList>
    </citation>
    <scope>FUNCTION</scope>
    <scope>CATALYTIC ACTIVITY</scope>
    <scope>BIOPHYSICOCHEMICAL PROPERTIES</scope>
    <scope>INDUCTION</scope>
</reference>
<sequence>MMYASLVHWLALAVALAVPFVTALGSVPYPQDDPFYYPSENGWQNEAPGTILRQRKIQAASLGIFEWKLDAWQVLYRTAGARPDKPSYTVTTFLVPSHAHRDRVVTISSPENSNFIQCAPSYAFRKTGVLEIANFEPRWEQMLYTLFLAEGWIVNAPDHEGPESAFSAGRFGGHMVLDSMRAANNFKPLQLSSNPMHIGHGYSGGSTPNGWAASLHESYANELNVVGWSLGGSMTDPLYTLNSLDGKPTSSLVVAGAIGLMDAYRDEVGNLLDDEVWTEEGKIAEKVMRNSCVYESVIRYFGTTFQSERYIKGGRNLSSWPQMRKISNMNTMGHNPRFTPRKPIFMFHALYDEEINWHQANKTAVEWCNNGANVRFLTYSSTSLVHVTTYLLNLPYIVQYMRDRFNGKDWYGGGCQFDVESQNPALDVNVLGERFRGILEAALDMLGKEIGPNDSILKNRLKAGQNPNTHHKTKLHVLKKGDISPGEGGDHTKESKKAAAKFKAEKKHGKHH</sequence>
<accession>A0A3G2S5J6</accession>
<organism>
    <name type="scientific">Malassezia restricta (strain ATCC 96810 / NBRC 103918 / CBS 7877)</name>
    <name type="common">Seborrheic dermatitis infection agent</name>
    <dbReference type="NCBI Taxonomy" id="425264"/>
    <lineage>
        <taxon>Eukaryota</taxon>
        <taxon>Fungi</taxon>
        <taxon>Dikarya</taxon>
        <taxon>Basidiomycota</taxon>
        <taxon>Ustilaginomycotina</taxon>
        <taxon>Malasseziomycetes</taxon>
        <taxon>Malasseziales</taxon>
        <taxon>Malasseziaceae</taxon>
        <taxon>Malassezia</taxon>
    </lineage>
</organism>
<gene>
    <name evidence="9" type="primary">LIP5</name>
    <name evidence="8" type="synonym">LIP4_1</name>
    <name type="ORF">DNF11_1418</name>
</gene>
<name>LIP5_MALR7</name>
<feature type="signal peptide" evidence="4">
    <location>
        <begin position="1"/>
        <end position="17"/>
    </location>
</feature>
<feature type="chain" id="PRO_5017952391" description="Secreted triacylglycerol lipase LIP5">
    <location>
        <begin position="18"/>
        <end position="512"/>
    </location>
</feature>
<feature type="region of interest" description="Disordered" evidence="6">
    <location>
        <begin position="480"/>
        <end position="512"/>
    </location>
</feature>
<feature type="compositionally biased region" description="Basic and acidic residues" evidence="6">
    <location>
        <begin position="488"/>
        <end position="497"/>
    </location>
</feature>
<feature type="compositionally biased region" description="Basic residues" evidence="6">
    <location>
        <begin position="498"/>
        <end position="512"/>
    </location>
</feature>
<feature type="active site" description="Nucleophile" evidence="1">
    <location>
        <position position="203"/>
    </location>
</feature>
<feature type="active site" evidence="1">
    <location>
        <position position="352"/>
    </location>
</feature>
<feature type="active site" evidence="1">
    <location>
        <position position="386"/>
    </location>
</feature>
<feature type="glycosylation site" description="N-linked (GlcNAc...) asparagine" evidence="5">
    <location>
        <position position="316"/>
    </location>
</feature>
<feature type="glycosylation site" description="N-linked (GlcNAc...) asparagine" evidence="5">
    <location>
        <position position="361"/>
    </location>
</feature>
<feature type="glycosylation site" description="N-linked (GlcNAc...) asparagine" evidence="5">
    <location>
        <position position="453"/>
    </location>
</feature>
<feature type="disulfide bond" evidence="3">
    <location>
        <begin position="118"/>
        <end position="292"/>
    </location>
</feature>
<comment type="function">
    <text evidence="2 7 11">Secreted lipase that hydrolyzes acylglycerol lipids such as triacylglycerols and consequently releases free fatty acid (By similarity). Can hydrolyze 4-nitrophenyl palmitate to release 4-nitrophenol and palmitoic acid (PubMed:33911790). Due to an absence of fatty acid synthase genes in Malassezia species, secretory lipases are essential for the yeast to generate free fatty acids from degradation of sebum and assimilate them as lipid sources for growth (Probable). Plays an essential role at the pathogen-host interface during disease progression (Probable).</text>
</comment>
<comment type="catalytic activity">
    <reaction evidence="2">
        <text>a triacylglycerol + H2O = a diacylglycerol + a fatty acid + H(+)</text>
        <dbReference type="Rhea" id="RHEA:12044"/>
        <dbReference type="ChEBI" id="CHEBI:15377"/>
        <dbReference type="ChEBI" id="CHEBI:15378"/>
        <dbReference type="ChEBI" id="CHEBI:17855"/>
        <dbReference type="ChEBI" id="CHEBI:18035"/>
        <dbReference type="ChEBI" id="CHEBI:28868"/>
        <dbReference type="EC" id="3.1.1.3"/>
    </reaction>
</comment>
<comment type="catalytic activity">
    <reaction evidence="2">
        <text>a monoacylglycerol + H2O = glycerol + a fatty acid + H(+)</text>
        <dbReference type="Rhea" id="RHEA:15245"/>
        <dbReference type="ChEBI" id="CHEBI:15377"/>
        <dbReference type="ChEBI" id="CHEBI:15378"/>
        <dbReference type="ChEBI" id="CHEBI:17408"/>
        <dbReference type="ChEBI" id="CHEBI:17754"/>
        <dbReference type="ChEBI" id="CHEBI:28868"/>
    </reaction>
</comment>
<comment type="catalytic activity">
    <reaction evidence="2">
        <text>a diacylglycerol + H2O = a monoacylglycerol + a fatty acid + H(+)</text>
        <dbReference type="Rhea" id="RHEA:32731"/>
        <dbReference type="ChEBI" id="CHEBI:15377"/>
        <dbReference type="ChEBI" id="CHEBI:15378"/>
        <dbReference type="ChEBI" id="CHEBI:17408"/>
        <dbReference type="ChEBI" id="CHEBI:18035"/>
        <dbReference type="ChEBI" id="CHEBI:28868"/>
    </reaction>
</comment>
<comment type="biophysicochemical properties">
    <phDependence>
        <text evidence="7">Optimum pH is 7.0-8.0.</text>
    </phDependence>
</comment>
<comment type="subcellular location">
    <subcellularLocation>
        <location evidence="11">Secreted</location>
    </subcellularLocation>
</comment>
<comment type="induction">
    <text evidence="7">Expression is regulated by environmental pH, and is expressed more highly under alkaline than under acidic pH (PubMed:33911790). The effect of temperature on expression is marginal (PubMed:33911790).</text>
</comment>
<comment type="similarity">
    <text evidence="10">Belongs to the AB hydrolase superfamily. Lipase family. Class Lip subfamily.</text>
</comment>
<protein>
    <recommendedName>
        <fullName evidence="9">Secreted triacylglycerol lipase LIP5</fullName>
        <ecNumber evidence="2">3.1.1.-</ecNumber>
        <ecNumber evidence="2">3.1.1.3</ecNumber>
    </recommendedName>
</protein>
<dbReference type="EC" id="3.1.1.-" evidence="2"/>
<dbReference type="EC" id="3.1.1.3" evidence="2"/>
<dbReference type="EMBL" id="CP033149">
    <property type="protein sequence ID" value="AYO42368.1"/>
    <property type="molecule type" value="Genomic_DNA"/>
</dbReference>
<dbReference type="SMR" id="A0A3G2S5J6"/>
<dbReference type="STRING" id="425264.A0A3G2S5J6"/>
<dbReference type="ESTHER" id="9basi-a0a3g2s5j6">
    <property type="family name" value="Fungal-Bact_LIP"/>
</dbReference>
<dbReference type="VEuPathDB" id="FungiDB:DNF11_1418"/>
<dbReference type="OrthoDB" id="854318at5204"/>
<dbReference type="Proteomes" id="UP000269793">
    <property type="component" value="Chromosome ii"/>
</dbReference>
<dbReference type="GO" id="GO:0005576">
    <property type="term" value="C:extracellular region"/>
    <property type="evidence" value="ECO:0007669"/>
    <property type="project" value="UniProtKB-SubCell"/>
</dbReference>
<dbReference type="GO" id="GO:0120516">
    <property type="term" value="F:diacylglycerol lipase activity"/>
    <property type="evidence" value="ECO:0007669"/>
    <property type="project" value="RHEA"/>
</dbReference>
<dbReference type="GO" id="GO:0047372">
    <property type="term" value="F:monoacylglycerol lipase activity"/>
    <property type="evidence" value="ECO:0007669"/>
    <property type="project" value="RHEA"/>
</dbReference>
<dbReference type="GO" id="GO:0004806">
    <property type="term" value="F:triacylglycerol lipase activity"/>
    <property type="evidence" value="ECO:0007669"/>
    <property type="project" value="UniProtKB-EC"/>
</dbReference>
<dbReference type="GO" id="GO:0016042">
    <property type="term" value="P:lipid catabolic process"/>
    <property type="evidence" value="ECO:0007669"/>
    <property type="project" value="UniProtKB-KW"/>
</dbReference>
<dbReference type="Gene3D" id="1.10.260.130">
    <property type="match status" value="1"/>
</dbReference>
<dbReference type="Gene3D" id="3.40.50.1820">
    <property type="entry name" value="alpha/beta hydrolase"/>
    <property type="match status" value="1"/>
</dbReference>
<dbReference type="InterPro" id="IPR029058">
    <property type="entry name" value="AB_hydrolase_fold"/>
</dbReference>
<dbReference type="InterPro" id="IPR005152">
    <property type="entry name" value="Lipase_secreted"/>
</dbReference>
<dbReference type="PANTHER" id="PTHR34853">
    <property type="match status" value="1"/>
</dbReference>
<dbReference type="PANTHER" id="PTHR34853:SF1">
    <property type="entry name" value="LIPASE 5"/>
    <property type="match status" value="1"/>
</dbReference>
<dbReference type="Pfam" id="PF03583">
    <property type="entry name" value="LIP"/>
    <property type="match status" value="1"/>
</dbReference>
<dbReference type="SUPFAM" id="SSF53474">
    <property type="entry name" value="alpha/beta-Hydrolases"/>
    <property type="match status" value="1"/>
</dbReference>
<keyword id="KW-1015">Disulfide bond</keyword>
<keyword id="KW-0325">Glycoprotein</keyword>
<keyword id="KW-0378">Hydrolase</keyword>
<keyword id="KW-0442">Lipid degradation</keyword>
<keyword id="KW-0443">Lipid metabolism</keyword>
<keyword id="KW-1185">Reference proteome</keyword>
<keyword id="KW-0964">Secreted</keyword>
<keyword id="KW-0732">Signal</keyword>
<keyword id="KW-0843">Virulence</keyword>